<gene>
    <name type="primary">psaD</name>
</gene>
<accession>Q9T4W8</accession>
<sequence length="220" mass="23660">MNAFVASVAPIAVAGSATLSSAVCAQKKAFFGAQVAAKKTTFEAAPARFIVRAEEEEAAPAEKVEKKAAAPKPFSVPTLNLNAPTPIFGGSTGGLLRKAEVEEFYSITWTGKSETVFELPTGGAAIMRAGENLLRLARKEQCIALGAQLKDKFKITDYKIYRVYPSGEVQFLHPKDGVFPEKVNPGRVAVGSNKRRIGQNPDPAKLKFKGQETFDSDLKL</sequence>
<evidence type="ECO:0000250" key="1"/>
<evidence type="ECO:0000255" key="2"/>
<evidence type="ECO:0000256" key="3">
    <source>
        <dbReference type="SAM" id="MobiDB-lite"/>
    </source>
</evidence>
<evidence type="ECO:0000305" key="4"/>
<evidence type="ECO:0007829" key="5">
    <source>
        <dbReference type="PDB" id="7DR0"/>
    </source>
</evidence>
<evidence type="ECO:0007829" key="6">
    <source>
        <dbReference type="PDB" id="7DR1"/>
    </source>
</evidence>
<protein>
    <recommendedName>
        <fullName>Photosystem I reaction center subunit II, cyanelle</fullName>
    </recommendedName>
    <alternativeName>
        <fullName>Photosystem I 20 kDa subunit</fullName>
        <shortName>PSI-D</shortName>
    </alternativeName>
</protein>
<name>PSAD_CYAPA</name>
<reference key="1">
    <citation type="submission" date="1999-02" db="EMBL/GenBank/DDBJ databases">
        <title>Nucleotide sequence of a cDNA encoding the entire precursor polypeptide for the 20 kDa PS I polypeptide of the photosystem I reaction center from Cyanophora paradoxa.</title>
        <authorList>
            <person name="Nickol A.A."/>
            <person name="Mueller N.E."/>
            <person name="Schenk H.E.A."/>
        </authorList>
    </citation>
    <scope>NUCLEOTIDE SEQUENCE [MRNA]</scope>
    <source>
        <strain>Pringsheim B 29.80</strain>
    </source>
</reference>
<keyword id="KW-0002">3D-structure</keyword>
<keyword id="KW-0194">Cyanelle</keyword>
<keyword id="KW-0472">Membrane</keyword>
<keyword id="KW-0602">Photosynthesis</keyword>
<keyword id="KW-0603">Photosystem I</keyword>
<keyword id="KW-0934">Plastid</keyword>
<keyword id="KW-0793">Thylakoid</keyword>
<keyword id="KW-0809">Transit peptide</keyword>
<dbReference type="EMBL" id="AJ132477">
    <property type="protein sequence ID" value="CAB64901.1"/>
    <property type="molecule type" value="mRNA"/>
</dbReference>
<dbReference type="PDB" id="7DR0">
    <property type="method" value="EM"/>
    <property type="resolution" value="3.30 A"/>
    <property type="chains" value="D=1-220"/>
</dbReference>
<dbReference type="PDB" id="7DR1">
    <property type="method" value="EM"/>
    <property type="resolution" value="3.20 A"/>
    <property type="chains" value="D=1-220"/>
</dbReference>
<dbReference type="PDB" id="7DR2">
    <property type="method" value="EM"/>
    <property type="resolution" value="3.80 A"/>
    <property type="chains" value="aD/bD/cD/dD=1-220"/>
</dbReference>
<dbReference type="PDBsum" id="7DR0"/>
<dbReference type="PDBsum" id="7DR1"/>
<dbReference type="PDBsum" id="7DR2"/>
<dbReference type="EMDB" id="EMD-30820"/>
<dbReference type="EMDB" id="EMD-30821"/>
<dbReference type="EMDB" id="EMD-30823"/>
<dbReference type="SMR" id="Q9T4W8"/>
<dbReference type="GO" id="GO:0033115">
    <property type="term" value="C:cyanelle thylakoid membrane"/>
    <property type="evidence" value="ECO:0007669"/>
    <property type="project" value="UniProtKB-SubCell"/>
</dbReference>
<dbReference type="GO" id="GO:0009538">
    <property type="term" value="C:photosystem I reaction center"/>
    <property type="evidence" value="ECO:0007669"/>
    <property type="project" value="InterPro"/>
</dbReference>
<dbReference type="GO" id="GO:0015979">
    <property type="term" value="P:photosynthesis"/>
    <property type="evidence" value="ECO:0007669"/>
    <property type="project" value="UniProtKB-KW"/>
</dbReference>
<dbReference type="Gene3D" id="3.30.1470.10">
    <property type="entry name" value="Photosystem I PsaD, reaction center subunit II"/>
    <property type="match status" value="1"/>
</dbReference>
<dbReference type="InterPro" id="IPR003685">
    <property type="entry name" value="PsaD"/>
</dbReference>
<dbReference type="InterPro" id="IPR036579">
    <property type="entry name" value="PsaD_sf"/>
</dbReference>
<dbReference type="PANTHER" id="PTHR31982:SF5">
    <property type="entry name" value="PHOTOSYSTEM I REACTION CENTER SUBUNIT II, CHLOROPLASTIC"/>
    <property type="match status" value="1"/>
</dbReference>
<dbReference type="PANTHER" id="PTHR31982">
    <property type="entry name" value="PHOTOSYSTEM I REACTION CENTER SUBUNIT II-1, CHLOROPLASTIC-RELATED"/>
    <property type="match status" value="1"/>
</dbReference>
<dbReference type="Pfam" id="PF02531">
    <property type="entry name" value="PsaD"/>
    <property type="match status" value="1"/>
</dbReference>
<dbReference type="SUPFAM" id="SSF64234">
    <property type="entry name" value="Photosystem I subunit PsaD"/>
    <property type="match status" value="1"/>
</dbReference>
<proteinExistence type="evidence at protein level"/>
<comment type="function">
    <text evidence="1">PsaD can form complexes with ferredoxin and ferredoxin-oxidoreductase in photosystem I (PS I) reaction center. PSAD may encode the ferredoxin-docking protein (By similarity).</text>
</comment>
<comment type="subcellular location">
    <subcellularLocation>
        <location evidence="1">Plastid</location>
        <location evidence="1">Cyanelle thylakoid membrane</location>
        <topology evidence="1">Peripheral membrane protein</topology>
        <orientation evidence="1">Stromal side</orientation>
    </subcellularLocation>
</comment>
<comment type="similarity">
    <text evidence="4">Belongs to the PsaD family.</text>
</comment>
<feature type="transit peptide" description="Cyanelle" evidence="2">
    <location>
        <begin position="1"/>
        <end position="53"/>
    </location>
</feature>
<feature type="chain" id="PRO_0000042150" description="Photosystem I reaction center subunit II, cyanelle">
    <location>
        <begin position="54"/>
        <end position="220"/>
    </location>
</feature>
<feature type="region of interest" description="Disordered" evidence="3">
    <location>
        <begin position="192"/>
        <end position="220"/>
    </location>
</feature>
<feature type="compositionally biased region" description="Basic and acidic residues" evidence="3">
    <location>
        <begin position="209"/>
        <end position="220"/>
    </location>
</feature>
<feature type="strand" evidence="6">
    <location>
        <begin position="92"/>
        <end position="94"/>
    </location>
</feature>
<feature type="helix" evidence="6">
    <location>
        <begin position="98"/>
        <end position="101"/>
    </location>
</feature>
<feature type="strand" evidence="6">
    <location>
        <begin position="105"/>
        <end position="109"/>
    </location>
</feature>
<feature type="strand" evidence="5">
    <location>
        <begin position="112"/>
        <end position="114"/>
    </location>
</feature>
<feature type="strand" evidence="6">
    <location>
        <begin position="120"/>
        <end position="123"/>
    </location>
</feature>
<feature type="strand" evidence="6">
    <location>
        <begin position="132"/>
        <end position="137"/>
    </location>
</feature>
<feature type="helix" evidence="6">
    <location>
        <begin position="139"/>
        <end position="151"/>
    </location>
</feature>
<feature type="strand" evidence="6">
    <location>
        <begin position="159"/>
        <end position="162"/>
    </location>
</feature>
<feature type="strand" evidence="5">
    <location>
        <begin position="164"/>
        <end position="167"/>
    </location>
</feature>
<feature type="turn" evidence="6">
    <location>
        <begin position="203"/>
        <end position="208"/>
    </location>
</feature>
<organism>
    <name type="scientific">Cyanophora paradoxa</name>
    <dbReference type="NCBI Taxonomy" id="2762"/>
    <lineage>
        <taxon>Eukaryota</taxon>
        <taxon>Glaucocystophyceae</taxon>
        <taxon>Cyanophoraceae</taxon>
        <taxon>Cyanophora</taxon>
    </lineage>
</organism>